<reference key="1">
    <citation type="journal article" date="2003" name="Proc. Natl. Acad. Sci. U.S.A.">
        <title>Genome sequence of the cyanobacterium Prochlorococcus marinus SS120, a nearly minimal oxyphototrophic genome.</title>
        <authorList>
            <person name="Dufresne A."/>
            <person name="Salanoubat M."/>
            <person name="Partensky F."/>
            <person name="Artiguenave F."/>
            <person name="Axmann I.M."/>
            <person name="Barbe V."/>
            <person name="Duprat S."/>
            <person name="Galperin M.Y."/>
            <person name="Koonin E.V."/>
            <person name="Le Gall F."/>
            <person name="Makarova K.S."/>
            <person name="Ostrowski M."/>
            <person name="Oztas S."/>
            <person name="Robert C."/>
            <person name="Rogozin I.B."/>
            <person name="Scanlan D.J."/>
            <person name="Tandeau de Marsac N."/>
            <person name="Weissenbach J."/>
            <person name="Wincker P."/>
            <person name="Wolf Y.I."/>
            <person name="Hess W.R."/>
        </authorList>
    </citation>
    <scope>NUCLEOTIDE SEQUENCE [LARGE SCALE GENOMIC DNA]</scope>
    <source>
        <strain>SARG / CCMP1375 / SS120</strain>
    </source>
</reference>
<keyword id="KW-0963">Cytoplasm</keyword>
<keyword id="KW-0378">Hydrolase</keyword>
<keyword id="KW-0645">Protease</keyword>
<keyword id="KW-1185">Reference proteome</keyword>
<keyword id="KW-0720">Serine protease</keyword>
<sequence>MIPIVVEETGRGERAFDIYSRLLRERIVFLGEQVTNDSANRIVAQLLFLEAEDPEKDIFLYINSPGGSVYDGFGIFDTIQHIKPDVHTVCVGLAASMGAFLLCAGAKGKRSSLQHSRIMIHQPLGGARGQATDIRIQADEILFLKQKLNTELSNRTGQPLSKIAEDTDRDFYMSPSEAISYGIIDNVLNKKPVSVL</sequence>
<protein>
    <recommendedName>
        <fullName evidence="1">ATP-dependent Clp protease proteolytic subunit 1</fullName>
        <ecNumber evidence="1">3.4.21.92</ecNumber>
    </recommendedName>
    <alternativeName>
        <fullName evidence="1">Endopeptidase Clp 1</fullName>
    </alternativeName>
</protein>
<dbReference type="EC" id="3.4.21.92" evidence="1"/>
<dbReference type="EMBL" id="AE017126">
    <property type="protein sequence ID" value="AAP99964.1"/>
    <property type="molecule type" value="Genomic_DNA"/>
</dbReference>
<dbReference type="RefSeq" id="NP_875312.1">
    <property type="nucleotide sequence ID" value="NC_005042.1"/>
</dbReference>
<dbReference type="SMR" id="Q7VC22"/>
<dbReference type="STRING" id="167539.Pro_0920"/>
<dbReference type="MEROPS" id="S14.001"/>
<dbReference type="EnsemblBacteria" id="AAP99964">
    <property type="protein sequence ID" value="AAP99964"/>
    <property type="gene ID" value="Pro_0920"/>
</dbReference>
<dbReference type="KEGG" id="pma:Pro_0920"/>
<dbReference type="PATRIC" id="fig|167539.5.peg.968"/>
<dbReference type="eggNOG" id="COG0740">
    <property type="taxonomic scope" value="Bacteria"/>
</dbReference>
<dbReference type="HOGENOM" id="CLU_058707_3_2_3"/>
<dbReference type="OrthoDB" id="571524at2"/>
<dbReference type="Proteomes" id="UP000001420">
    <property type="component" value="Chromosome"/>
</dbReference>
<dbReference type="GO" id="GO:0005737">
    <property type="term" value="C:cytoplasm"/>
    <property type="evidence" value="ECO:0007669"/>
    <property type="project" value="UniProtKB-SubCell"/>
</dbReference>
<dbReference type="GO" id="GO:0009368">
    <property type="term" value="C:endopeptidase Clp complex"/>
    <property type="evidence" value="ECO:0007669"/>
    <property type="project" value="TreeGrafter"/>
</dbReference>
<dbReference type="GO" id="GO:0004176">
    <property type="term" value="F:ATP-dependent peptidase activity"/>
    <property type="evidence" value="ECO:0007669"/>
    <property type="project" value="InterPro"/>
</dbReference>
<dbReference type="GO" id="GO:0051117">
    <property type="term" value="F:ATPase binding"/>
    <property type="evidence" value="ECO:0007669"/>
    <property type="project" value="TreeGrafter"/>
</dbReference>
<dbReference type="GO" id="GO:0004252">
    <property type="term" value="F:serine-type endopeptidase activity"/>
    <property type="evidence" value="ECO:0007669"/>
    <property type="project" value="UniProtKB-UniRule"/>
</dbReference>
<dbReference type="GO" id="GO:0006515">
    <property type="term" value="P:protein quality control for misfolded or incompletely synthesized proteins"/>
    <property type="evidence" value="ECO:0007669"/>
    <property type="project" value="TreeGrafter"/>
</dbReference>
<dbReference type="CDD" id="cd07017">
    <property type="entry name" value="S14_ClpP_2"/>
    <property type="match status" value="1"/>
</dbReference>
<dbReference type="FunFam" id="3.90.226.10:FF:000001">
    <property type="entry name" value="ATP-dependent Clp protease proteolytic subunit"/>
    <property type="match status" value="1"/>
</dbReference>
<dbReference type="Gene3D" id="3.90.226.10">
    <property type="entry name" value="2-enoyl-CoA Hydratase, Chain A, domain 1"/>
    <property type="match status" value="1"/>
</dbReference>
<dbReference type="HAMAP" id="MF_00444">
    <property type="entry name" value="ClpP"/>
    <property type="match status" value="1"/>
</dbReference>
<dbReference type="InterPro" id="IPR001907">
    <property type="entry name" value="ClpP"/>
</dbReference>
<dbReference type="InterPro" id="IPR029045">
    <property type="entry name" value="ClpP/crotonase-like_dom_sf"/>
</dbReference>
<dbReference type="InterPro" id="IPR023562">
    <property type="entry name" value="ClpP/TepA"/>
</dbReference>
<dbReference type="InterPro" id="IPR018215">
    <property type="entry name" value="ClpP_Ser_AS"/>
</dbReference>
<dbReference type="NCBIfam" id="TIGR00493">
    <property type="entry name" value="clpP"/>
    <property type="match status" value="1"/>
</dbReference>
<dbReference type="NCBIfam" id="NF001368">
    <property type="entry name" value="PRK00277.1"/>
    <property type="match status" value="1"/>
</dbReference>
<dbReference type="NCBIfam" id="NF009203">
    <property type="entry name" value="PRK12551.1"/>
    <property type="match status" value="1"/>
</dbReference>
<dbReference type="NCBIfam" id="NF009205">
    <property type="entry name" value="PRK12553.1"/>
    <property type="match status" value="1"/>
</dbReference>
<dbReference type="PANTHER" id="PTHR10381">
    <property type="entry name" value="ATP-DEPENDENT CLP PROTEASE PROTEOLYTIC SUBUNIT"/>
    <property type="match status" value="1"/>
</dbReference>
<dbReference type="PANTHER" id="PTHR10381:SF70">
    <property type="entry name" value="ATP-DEPENDENT CLP PROTEASE PROTEOLYTIC SUBUNIT"/>
    <property type="match status" value="1"/>
</dbReference>
<dbReference type="Pfam" id="PF00574">
    <property type="entry name" value="CLP_protease"/>
    <property type="match status" value="1"/>
</dbReference>
<dbReference type="PRINTS" id="PR00127">
    <property type="entry name" value="CLPPROTEASEP"/>
</dbReference>
<dbReference type="SUPFAM" id="SSF52096">
    <property type="entry name" value="ClpP/crotonase"/>
    <property type="match status" value="1"/>
</dbReference>
<dbReference type="PROSITE" id="PS00381">
    <property type="entry name" value="CLP_PROTEASE_SER"/>
    <property type="match status" value="1"/>
</dbReference>
<gene>
    <name evidence="1" type="primary">clpP1</name>
    <name type="ordered locus">Pro_0920</name>
</gene>
<feature type="chain" id="PRO_0000179617" description="ATP-dependent Clp protease proteolytic subunit 1">
    <location>
        <begin position="1"/>
        <end position="196"/>
    </location>
</feature>
<feature type="active site" description="Nucleophile" evidence="1">
    <location>
        <position position="96"/>
    </location>
</feature>
<feature type="active site" evidence="1">
    <location>
        <position position="121"/>
    </location>
</feature>
<comment type="function">
    <text evidence="1">Cleaves peptides in various proteins in a process that requires ATP hydrolysis. Has a chymotrypsin-like activity. Plays a major role in the degradation of misfolded proteins.</text>
</comment>
<comment type="catalytic activity">
    <reaction evidence="1">
        <text>Hydrolysis of proteins to small peptides in the presence of ATP and magnesium. alpha-casein is the usual test substrate. In the absence of ATP, only oligopeptides shorter than five residues are hydrolyzed (such as succinyl-Leu-Tyr-|-NHMec, and Leu-Tyr-Leu-|-Tyr-Trp, in which cleavage of the -Tyr-|-Leu- and -Tyr-|-Trp bonds also occurs).</text>
        <dbReference type="EC" id="3.4.21.92"/>
    </reaction>
</comment>
<comment type="subunit">
    <text evidence="1">Fourteen ClpP subunits assemble into 2 heptameric rings which stack back to back to give a disk-like structure with a central cavity, resembling the structure of eukaryotic proteasomes.</text>
</comment>
<comment type="subcellular location">
    <subcellularLocation>
        <location evidence="1">Cytoplasm</location>
    </subcellularLocation>
</comment>
<comment type="similarity">
    <text evidence="1">Belongs to the peptidase S14 family.</text>
</comment>
<accession>Q7VC22</accession>
<organism>
    <name type="scientific">Prochlorococcus marinus (strain SARG / CCMP1375 / SS120)</name>
    <dbReference type="NCBI Taxonomy" id="167539"/>
    <lineage>
        <taxon>Bacteria</taxon>
        <taxon>Bacillati</taxon>
        <taxon>Cyanobacteriota</taxon>
        <taxon>Cyanophyceae</taxon>
        <taxon>Synechococcales</taxon>
        <taxon>Prochlorococcaceae</taxon>
        <taxon>Prochlorococcus</taxon>
    </lineage>
</organism>
<proteinExistence type="inferred from homology"/>
<name>CLPP1_PROMA</name>
<evidence type="ECO:0000255" key="1">
    <source>
        <dbReference type="HAMAP-Rule" id="MF_00444"/>
    </source>
</evidence>